<organism>
    <name type="scientific">Mycobacterium tuberculosis (strain CDC 1551 / Oshkosh)</name>
    <dbReference type="NCBI Taxonomy" id="83331"/>
    <lineage>
        <taxon>Bacteria</taxon>
        <taxon>Bacillati</taxon>
        <taxon>Actinomycetota</taxon>
        <taxon>Actinomycetes</taxon>
        <taxon>Mycobacteriales</taxon>
        <taxon>Mycobacteriaceae</taxon>
        <taxon>Mycobacterium</taxon>
        <taxon>Mycobacterium tuberculosis complex</taxon>
    </lineage>
</organism>
<dbReference type="EC" id="6.3.2.6"/>
<dbReference type="EMBL" id="AE000516">
    <property type="protein sequence ID" value="AAK45046.1"/>
    <property type="molecule type" value="Genomic_DNA"/>
</dbReference>
<dbReference type="PIR" id="G70708">
    <property type="entry name" value="G70708"/>
</dbReference>
<dbReference type="RefSeq" id="WP_003403962.1">
    <property type="nucleotide sequence ID" value="NZ_KK341227.1"/>
</dbReference>
<dbReference type="SMR" id="P9WHN0"/>
<dbReference type="KEGG" id="mtc:MT0804"/>
<dbReference type="PATRIC" id="fig|83331.31.peg.863"/>
<dbReference type="HOGENOM" id="CLU_045637_0_0_11"/>
<dbReference type="UniPathway" id="UPA00074">
    <property type="reaction ID" value="UER00131"/>
</dbReference>
<dbReference type="Proteomes" id="UP000001020">
    <property type="component" value="Chromosome"/>
</dbReference>
<dbReference type="GO" id="GO:0005737">
    <property type="term" value="C:cytoplasm"/>
    <property type="evidence" value="ECO:0007669"/>
    <property type="project" value="TreeGrafter"/>
</dbReference>
<dbReference type="GO" id="GO:0005524">
    <property type="term" value="F:ATP binding"/>
    <property type="evidence" value="ECO:0007669"/>
    <property type="project" value="UniProtKB-KW"/>
</dbReference>
<dbReference type="GO" id="GO:0004639">
    <property type="term" value="F:phosphoribosylaminoimidazolesuccinocarboxamide synthase activity"/>
    <property type="evidence" value="ECO:0007669"/>
    <property type="project" value="UniProtKB-UniRule"/>
</dbReference>
<dbReference type="GO" id="GO:0006189">
    <property type="term" value="P:'de novo' IMP biosynthetic process"/>
    <property type="evidence" value="ECO:0007669"/>
    <property type="project" value="UniProtKB-UniRule"/>
</dbReference>
<dbReference type="CDD" id="cd01414">
    <property type="entry name" value="SAICAR_synt_Sc"/>
    <property type="match status" value="1"/>
</dbReference>
<dbReference type="FunFam" id="3.30.200.20:FF:000199">
    <property type="entry name" value="Phosphoribosylaminoimidazole-succinocarboxamide synthase"/>
    <property type="match status" value="1"/>
</dbReference>
<dbReference type="FunFam" id="3.30.470.20:FF:000015">
    <property type="entry name" value="Phosphoribosylaminoimidazole-succinocarboxamide synthase"/>
    <property type="match status" value="1"/>
</dbReference>
<dbReference type="Gene3D" id="3.30.470.20">
    <property type="entry name" value="ATP-grasp fold, B domain"/>
    <property type="match status" value="1"/>
</dbReference>
<dbReference type="Gene3D" id="3.30.200.20">
    <property type="entry name" value="Phosphorylase Kinase, domain 1"/>
    <property type="match status" value="1"/>
</dbReference>
<dbReference type="HAMAP" id="MF_00137">
    <property type="entry name" value="SAICAR_synth"/>
    <property type="match status" value="1"/>
</dbReference>
<dbReference type="InterPro" id="IPR028923">
    <property type="entry name" value="SAICAR_synt/ADE2_N"/>
</dbReference>
<dbReference type="InterPro" id="IPR001636">
    <property type="entry name" value="SAICAR_synth"/>
</dbReference>
<dbReference type="InterPro" id="IPR018236">
    <property type="entry name" value="SAICAR_synthetase_CS"/>
</dbReference>
<dbReference type="NCBIfam" id="NF010568">
    <property type="entry name" value="PRK13961.1"/>
    <property type="match status" value="1"/>
</dbReference>
<dbReference type="NCBIfam" id="TIGR00081">
    <property type="entry name" value="purC"/>
    <property type="match status" value="1"/>
</dbReference>
<dbReference type="PANTHER" id="PTHR43700">
    <property type="entry name" value="PHOSPHORIBOSYLAMINOIMIDAZOLE-SUCCINOCARBOXAMIDE SYNTHASE"/>
    <property type="match status" value="1"/>
</dbReference>
<dbReference type="PANTHER" id="PTHR43700:SF1">
    <property type="entry name" value="PHOSPHORIBOSYLAMINOIMIDAZOLE-SUCCINOCARBOXAMIDE SYNTHASE"/>
    <property type="match status" value="1"/>
</dbReference>
<dbReference type="Pfam" id="PF01259">
    <property type="entry name" value="SAICAR_synt"/>
    <property type="match status" value="1"/>
</dbReference>
<dbReference type="SUPFAM" id="SSF56104">
    <property type="entry name" value="SAICAR synthase-like"/>
    <property type="match status" value="1"/>
</dbReference>
<dbReference type="PROSITE" id="PS01057">
    <property type="entry name" value="SAICAR_SYNTHETASE_1"/>
    <property type="match status" value="1"/>
</dbReference>
<dbReference type="PROSITE" id="PS01058">
    <property type="entry name" value="SAICAR_SYNTHETASE_2"/>
    <property type="match status" value="1"/>
</dbReference>
<keyword id="KW-0067">ATP-binding</keyword>
<keyword id="KW-0436">Ligase</keyword>
<keyword id="KW-0547">Nucleotide-binding</keyword>
<keyword id="KW-0658">Purine biosynthesis</keyword>
<keyword id="KW-1185">Reference proteome</keyword>
<sequence>MRPALSDYQHVASGKVREIYRVDDEHLLLVASDRISAYDYVLDSTIPDKGRVLTAMSAFFFGLVDAPNHLAGPPDDPRIPDEVLGRALVVRRLEMLPVECVARGYLTGSGLLDYQATGKVCGIALPPGLVEASRFATPLFTPATKAALGDHDENISFDRVVEMVGALRANQLRDRTLQTYVQAADHALTRGIIIADTKFEFGIDRHGNLLLADEIFTPDSSRYWPADDYRAGVVQTSFDKQFVRSWLTGSESGWDRGSDRPPPPLPEHIVEATRARYINAYERISELKFDDWIGPGA</sequence>
<proteinExistence type="inferred from homology"/>
<reference key="1">
    <citation type="journal article" date="2002" name="J. Bacteriol.">
        <title>Whole-genome comparison of Mycobacterium tuberculosis clinical and laboratory strains.</title>
        <authorList>
            <person name="Fleischmann R.D."/>
            <person name="Alland D."/>
            <person name="Eisen J.A."/>
            <person name="Carpenter L."/>
            <person name="White O."/>
            <person name="Peterson J.D."/>
            <person name="DeBoy R.T."/>
            <person name="Dodson R.J."/>
            <person name="Gwinn M.L."/>
            <person name="Haft D.H."/>
            <person name="Hickey E.K."/>
            <person name="Kolonay J.F."/>
            <person name="Nelson W.C."/>
            <person name="Umayam L.A."/>
            <person name="Ermolaeva M.D."/>
            <person name="Salzberg S.L."/>
            <person name="Delcher A."/>
            <person name="Utterback T.R."/>
            <person name="Weidman J.F."/>
            <person name="Khouri H.M."/>
            <person name="Gill J."/>
            <person name="Mikula A."/>
            <person name="Bishai W."/>
            <person name="Jacobs W.R. Jr."/>
            <person name="Venter J.C."/>
            <person name="Fraser C.M."/>
        </authorList>
    </citation>
    <scope>NUCLEOTIDE SEQUENCE [LARGE SCALE GENOMIC DNA]</scope>
    <source>
        <strain>CDC 1551 / Oshkosh</strain>
    </source>
</reference>
<evidence type="ECO:0000305" key="1"/>
<comment type="catalytic activity">
    <reaction>
        <text>5-amino-1-(5-phospho-D-ribosyl)imidazole-4-carboxylate + L-aspartate + ATP = (2S)-2-[5-amino-1-(5-phospho-beta-D-ribosyl)imidazole-4-carboxamido]succinate + ADP + phosphate + 2 H(+)</text>
        <dbReference type="Rhea" id="RHEA:22628"/>
        <dbReference type="ChEBI" id="CHEBI:15378"/>
        <dbReference type="ChEBI" id="CHEBI:29991"/>
        <dbReference type="ChEBI" id="CHEBI:30616"/>
        <dbReference type="ChEBI" id="CHEBI:43474"/>
        <dbReference type="ChEBI" id="CHEBI:58443"/>
        <dbReference type="ChEBI" id="CHEBI:77657"/>
        <dbReference type="ChEBI" id="CHEBI:456216"/>
        <dbReference type="EC" id="6.3.2.6"/>
    </reaction>
</comment>
<comment type="pathway">
    <text>Purine metabolism; IMP biosynthesis via de novo pathway; 5-amino-1-(5-phospho-D-ribosyl)imidazole-4-carboxamide from 5-amino-1-(5-phospho-D-ribosyl)imidazole-4-carboxylate: step 1/2.</text>
</comment>
<comment type="similarity">
    <text evidence="1">Belongs to the SAICAR synthetase family.</text>
</comment>
<accession>P9WHN0</accession>
<accession>L0T7P9</accession>
<accession>P0A5T4</accession>
<accession>P77904</accession>
<accession>Q59566</accession>
<gene>
    <name type="primary">purC</name>
    <name type="ordered locus">MT0804</name>
</gene>
<feature type="chain" id="PRO_0000428156" description="Phosphoribosylaminoimidazole-succinocarboxamide synthase">
    <location>
        <begin position="1"/>
        <end position="297"/>
    </location>
</feature>
<name>PUR7_MYCTO</name>
<protein>
    <recommendedName>
        <fullName>Phosphoribosylaminoimidazole-succinocarboxamide synthase</fullName>
        <ecNumber>6.3.2.6</ecNumber>
    </recommendedName>
    <alternativeName>
        <fullName>SAICAR synthetase</fullName>
    </alternativeName>
</protein>